<name>LAMC1_XENTR</name>
<reference key="1">
    <citation type="submission" date="2006-11" db="EMBL/GenBank/DDBJ databases">
        <authorList>
            <consortium name="NIH - Xenopus Gene Collection (XGC) project"/>
        </authorList>
    </citation>
    <scope>NUCLEOTIDE SEQUENCE [LARGE SCALE MRNA]</scope>
    <source>
        <tissue>Brain</tissue>
    </source>
</reference>
<organism>
    <name type="scientific">Xenopus tropicalis</name>
    <name type="common">Western clawed frog</name>
    <name type="synonym">Silurana tropicalis</name>
    <dbReference type="NCBI Taxonomy" id="8364"/>
    <lineage>
        <taxon>Eukaryota</taxon>
        <taxon>Metazoa</taxon>
        <taxon>Chordata</taxon>
        <taxon>Craniata</taxon>
        <taxon>Vertebrata</taxon>
        <taxon>Euteleostomi</taxon>
        <taxon>Amphibia</taxon>
        <taxon>Batrachia</taxon>
        <taxon>Anura</taxon>
        <taxon>Pipoidea</taxon>
        <taxon>Pipidae</taxon>
        <taxon>Xenopodinae</taxon>
        <taxon>Xenopus</taxon>
        <taxon>Silurana</taxon>
    </lineage>
</organism>
<gene>
    <name type="primary">lamc1</name>
</gene>
<feature type="signal peptide" evidence="2">
    <location>
        <begin position="1"/>
        <end position="19"/>
    </location>
</feature>
<feature type="chain" id="PRO_0000364202" description="Laminin subunit gamma-1">
    <location>
        <begin position="20"/>
        <end position="1592"/>
    </location>
</feature>
<feature type="domain" description="Laminin N-terminal" evidence="5">
    <location>
        <begin position="29"/>
        <end position="268"/>
    </location>
</feature>
<feature type="domain" description="Laminin EGF-like 1" evidence="4">
    <location>
        <begin position="269"/>
        <end position="324"/>
    </location>
</feature>
<feature type="domain" description="Laminin EGF-like 2" evidence="4">
    <location>
        <begin position="325"/>
        <end position="380"/>
    </location>
</feature>
<feature type="domain" description="Laminin EGF-like 3" evidence="4">
    <location>
        <begin position="381"/>
        <end position="427"/>
    </location>
</feature>
<feature type="domain" description="Laminin EGF-like 4" evidence="4">
    <location>
        <begin position="428"/>
        <end position="477"/>
    </location>
</feature>
<feature type="domain" description="Laminin IV type A" evidence="3">
    <location>
        <begin position="504"/>
        <end position="672"/>
    </location>
</feature>
<feature type="domain" description="Laminin EGF-like 5" evidence="4">
    <location>
        <begin position="707"/>
        <end position="755"/>
    </location>
</feature>
<feature type="domain" description="Laminin EGF-like 6" evidence="4">
    <location>
        <begin position="756"/>
        <end position="810"/>
    </location>
</feature>
<feature type="domain" description="Laminin EGF-like 7" evidence="4">
    <location>
        <begin position="811"/>
        <end position="866"/>
    </location>
</feature>
<feature type="domain" description="Laminin EGF-like 8" evidence="4">
    <location>
        <begin position="867"/>
        <end position="917"/>
    </location>
</feature>
<feature type="domain" description="Laminin EGF-like 9" evidence="4">
    <location>
        <begin position="918"/>
        <end position="965"/>
    </location>
</feature>
<feature type="domain" description="Laminin EGF-like 10" evidence="4">
    <location>
        <begin position="966"/>
        <end position="1013"/>
    </location>
</feature>
<feature type="region of interest" description="Domain II and I" evidence="1">
    <location>
        <begin position="1013"/>
        <end position="1592"/>
    </location>
</feature>
<feature type="region of interest" description="Disordered" evidence="6">
    <location>
        <begin position="1456"/>
        <end position="1489"/>
    </location>
</feature>
<feature type="coiled-coil region" evidence="2">
    <location>
        <begin position="1018"/>
        <end position="1477"/>
    </location>
</feature>
<feature type="coiled-coil region" evidence="2">
    <location>
        <begin position="1515"/>
        <end position="1579"/>
    </location>
</feature>
<feature type="compositionally biased region" description="Basic and acidic residues" evidence="6">
    <location>
        <begin position="1456"/>
        <end position="1472"/>
    </location>
</feature>
<feature type="compositionally biased region" description="Polar residues" evidence="6">
    <location>
        <begin position="1476"/>
        <end position="1489"/>
    </location>
</feature>
<feature type="glycosylation site" description="N-linked (GlcNAc...) asparagine" evidence="2">
    <location>
        <position position="43"/>
    </location>
</feature>
<feature type="glycosylation site" description="N-linked (GlcNAc...) asparagine" evidence="2">
    <location>
        <position position="117"/>
    </location>
</feature>
<feature type="glycosylation site" description="N-linked (GlcNAc...) asparagine" evidence="2">
    <location>
        <position position="559"/>
    </location>
</feature>
<feature type="glycosylation site" description="N-linked (GlcNAc...) asparagine" evidence="2">
    <location>
        <position position="633"/>
    </location>
</feature>
<feature type="glycosylation site" description="N-linked (GlcNAc...) asparagine" evidence="2">
    <location>
        <position position="1005"/>
    </location>
</feature>
<feature type="glycosylation site" description="N-linked (GlcNAc...) asparagine" evidence="2">
    <location>
        <position position="1041"/>
    </location>
</feature>
<feature type="glycosylation site" description="N-linked (GlcNAc...) asparagine" evidence="2">
    <location>
        <position position="1048"/>
    </location>
</feature>
<feature type="glycosylation site" description="N-linked (GlcNAc...) asparagine" evidence="2">
    <location>
        <position position="1090"/>
    </location>
</feature>
<feature type="glycosylation site" description="N-linked (GlcNAc...) asparagine" evidence="2">
    <location>
        <position position="1144"/>
    </location>
</feature>
<feature type="glycosylation site" description="N-linked (GlcNAc...) asparagine" evidence="2">
    <location>
        <position position="1158"/>
    </location>
</feature>
<feature type="glycosylation site" description="N-linked (GlcNAc...) asparagine" evidence="2">
    <location>
        <position position="1188"/>
    </location>
</feature>
<feature type="glycosylation site" description="N-linked (GlcNAc...) asparagine" evidence="2">
    <location>
        <position position="1206"/>
    </location>
</feature>
<feature type="glycosylation site" description="N-linked (GlcNAc...) asparagine" evidence="2">
    <location>
        <position position="1253"/>
    </location>
</feature>
<feature type="glycosylation site" description="N-linked (GlcNAc...) asparagine" evidence="2">
    <location>
        <position position="1363"/>
    </location>
</feature>
<feature type="glycosylation site" description="N-linked (GlcNAc...) asparagine" evidence="2">
    <location>
        <position position="1386"/>
    </location>
</feature>
<feature type="glycosylation site" description="N-linked (GlcNAc...) asparagine" evidence="2">
    <location>
        <position position="1477"/>
    </location>
</feature>
<feature type="glycosylation site" description="N-linked (GlcNAc...) asparagine" evidence="2">
    <location>
        <position position="1487"/>
    </location>
</feature>
<feature type="disulfide bond" evidence="4">
    <location>
        <begin position="269"/>
        <end position="278"/>
    </location>
</feature>
<feature type="disulfide bond" evidence="4">
    <location>
        <begin position="271"/>
        <end position="288"/>
    </location>
</feature>
<feature type="disulfide bond" evidence="4">
    <location>
        <begin position="290"/>
        <end position="299"/>
    </location>
</feature>
<feature type="disulfide bond" evidence="4">
    <location>
        <begin position="302"/>
        <end position="322"/>
    </location>
</feature>
<feature type="disulfide bond" evidence="4">
    <location>
        <begin position="325"/>
        <end position="334"/>
    </location>
</feature>
<feature type="disulfide bond" evidence="4">
    <location>
        <begin position="327"/>
        <end position="350"/>
    </location>
</feature>
<feature type="disulfide bond" evidence="4">
    <location>
        <begin position="353"/>
        <end position="362"/>
    </location>
</feature>
<feature type="disulfide bond" evidence="4">
    <location>
        <begin position="365"/>
        <end position="378"/>
    </location>
</feature>
<feature type="disulfide bond" evidence="4">
    <location>
        <begin position="381"/>
        <end position="393"/>
    </location>
</feature>
<feature type="disulfide bond" evidence="4">
    <location>
        <begin position="383"/>
        <end position="399"/>
    </location>
</feature>
<feature type="disulfide bond" evidence="4">
    <location>
        <begin position="401"/>
        <end position="410"/>
    </location>
</feature>
<feature type="disulfide bond" evidence="4">
    <location>
        <begin position="413"/>
        <end position="425"/>
    </location>
</feature>
<feature type="disulfide bond" evidence="4">
    <location>
        <begin position="428"/>
        <end position="439"/>
    </location>
</feature>
<feature type="disulfide bond" evidence="4">
    <location>
        <begin position="430"/>
        <end position="446"/>
    </location>
</feature>
<feature type="disulfide bond" evidence="4">
    <location>
        <begin position="448"/>
        <end position="457"/>
    </location>
</feature>
<feature type="disulfide bond" evidence="4">
    <location>
        <begin position="460"/>
        <end position="475"/>
    </location>
</feature>
<feature type="disulfide bond" evidence="4">
    <location>
        <begin position="707"/>
        <end position="716"/>
    </location>
</feature>
<feature type="disulfide bond" evidence="4">
    <location>
        <begin position="709"/>
        <end position="723"/>
    </location>
</feature>
<feature type="disulfide bond" evidence="4">
    <location>
        <begin position="725"/>
        <end position="734"/>
    </location>
</feature>
<feature type="disulfide bond" evidence="4">
    <location>
        <begin position="737"/>
        <end position="753"/>
    </location>
</feature>
<feature type="disulfide bond" evidence="4">
    <location>
        <begin position="756"/>
        <end position="764"/>
    </location>
</feature>
<feature type="disulfide bond" evidence="4">
    <location>
        <begin position="758"/>
        <end position="775"/>
    </location>
</feature>
<feature type="disulfide bond" evidence="4">
    <location>
        <begin position="778"/>
        <end position="787"/>
    </location>
</feature>
<feature type="disulfide bond" evidence="4">
    <location>
        <begin position="790"/>
        <end position="808"/>
    </location>
</feature>
<feature type="disulfide bond" evidence="4">
    <location>
        <begin position="811"/>
        <end position="825"/>
    </location>
</feature>
<feature type="disulfide bond" evidence="4">
    <location>
        <begin position="813"/>
        <end position="832"/>
    </location>
</feature>
<feature type="disulfide bond" evidence="4">
    <location>
        <begin position="835"/>
        <end position="844"/>
    </location>
</feature>
<feature type="disulfide bond" evidence="4">
    <location>
        <begin position="847"/>
        <end position="864"/>
    </location>
</feature>
<feature type="disulfide bond" evidence="4">
    <location>
        <begin position="867"/>
        <end position="881"/>
    </location>
</feature>
<feature type="disulfide bond" evidence="4">
    <location>
        <begin position="869"/>
        <end position="888"/>
    </location>
</feature>
<feature type="disulfide bond" evidence="4">
    <location>
        <begin position="890"/>
        <end position="899"/>
    </location>
</feature>
<feature type="disulfide bond" evidence="4">
    <location>
        <begin position="902"/>
        <end position="915"/>
    </location>
</feature>
<feature type="disulfide bond" evidence="4">
    <location>
        <begin position="918"/>
        <end position="930"/>
    </location>
</feature>
<feature type="disulfide bond" evidence="4">
    <location>
        <begin position="920"/>
        <end position="937"/>
    </location>
</feature>
<feature type="disulfide bond" evidence="4">
    <location>
        <begin position="939"/>
        <end position="948"/>
    </location>
</feature>
<feature type="disulfide bond" evidence="4">
    <location>
        <begin position="951"/>
        <end position="963"/>
    </location>
</feature>
<feature type="disulfide bond" evidence="4">
    <location>
        <begin position="966"/>
        <end position="978"/>
    </location>
</feature>
<feature type="disulfide bond" evidence="4">
    <location>
        <begin position="968"/>
        <end position="984"/>
    </location>
</feature>
<feature type="disulfide bond" evidence="4">
    <location>
        <begin position="986"/>
        <end position="995"/>
    </location>
</feature>
<feature type="disulfide bond" evidence="4">
    <location>
        <begin position="998"/>
        <end position="1011"/>
    </location>
</feature>
<accession>A0JP86</accession>
<protein>
    <recommendedName>
        <fullName>Laminin subunit gamma-1</fullName>
    </recommendedName>
</protein>
<dbReference type="EMBL" id="BC127297">
    <property type="protein sequence ID" value="AAI27298.1"/>
    <property type="molecule type" value="mRNA"/>
</dbReference>
<dbReference type="RefSeq" id="NP_001090659.1">
    <property type="nucleotide sequence ID" value="NM_001097190.1"/>
</dbReference>
<dbReference type="SMR" id="A0JP86"/>
<dbReference type="FunCoup" id="A0JP86">
    <property type="interactions" value="817"/>
</dbReference>
<dbReference type="STRING" id="8364.ENSXETP00000032765"/>
<dbReference type="GlyCosmos" id="A0JP86">
    <property type="glycosylation" value="17 sites, No reported glycans"/>
</dbReference>
<dbReference type="PaxDb" id="8364-ENSXETP00000027398"/>
<dbReference type="DNASU" id="100036631"/>
<dbReference type="GeneID" id="100036631"/>
<dbReference type="KEGG" id="xtr:100036631"/>
<dbReference type="AGR" id="Xenbase:XB-GENE-478553"/>
<dbReference type="CTD" id="3915"/>
<dbReference type="Xenbase" id="XB-GENE-478553">
    <property type="gene designation" value="lamc1"/>
</dbReference>
<dbReference type="eggNOG" id="KOG1836">
    <property type="taxonomic scope" value="Eukaryota"/>
</dbReference>
<dbReference type="InParanoid" id="A0JP86"/>
<dbReference type="OMA" id="QGCTACF"/>
<dbReference type="OrthoDB" id="430826at2759"/>
<dbReference type="Proteomes" id="UP000008143">
    <property type="component" value="Chromosome 4"/>
</dbReference>
<dbReference type="GO" id="GO:0005604">
    <property type="term" value="C:basement membrane"/>
    <property type="evidence" value="ECO:0007669"/>
    <property type="project" value="UniProtKB-SubCell"/>
</dbReference>
<dbReference type="GO" id="GO:0005576">
    <property type="term" value="C:extracellular region"/>
    <property type="evidence" value="ECO:0007669"/>
    <property type="project" value="UniProtKB-KW"/>
</dbReference>
<dbReference type="GO" id="GO:0007155">
    <property type="term" value="P:cell adhesion"/>
    <property type="evidence" value="ECO:0007669"/>
    <property type="project" value="UniProtKB-KW"/>
</dbReference>
<dbReference type="CDD" id="cd06503">
    <property type="entry name" value="ATP-synt_Fo_b"/>
    <property type="match status" value="1"/>
</dbReference>
<dbReference type="CDD" id="cd00055">
    <property type="entry name" value="EGF_Lam"/>
    <property type="match status" value="10"/>
</dbReference>
<dbReference type="FunFam" id="2.10.25.10:FF:000067">
    <property type="entry name" value="Laminin subunit gamma 1"/>
    <property type="match status" value="2"/>
</dbReference>
<dbReference type="FunFam" id="2.10.25.10:FF:000193">
    <property type="entry name" value="Laminin subunit gamma 1"/>
    <property type="match status" value="1"/>
</dbReference>
<dbReference type="FunFam" id="2.10.25.10:FF:000758">
    <property type="entry name" value="Laminin subunit gamma 1"/>
    <property type="match status" value="1"/>
</dbReference>
<dbReference type="FunFam" id="2.60.120.260:FF:000018">
    <property type="entry name" value="Laminin subunit gamma 1"/>
    <property type="match status" value="1"/>
</dbReference>
<dbReference type="FunFam" id="2.10.25.10:FF:000174">
    <property type="entry name" value="Laminin subunit gamma-1"/>
    <property type="match status" value="1"/>
</dbReference>
<dbReference type="FunFam" id="2.10.25.10:FF:001192">
    <property type="entry name" value="Laminin subunit gamma-1"/>
    <property type="match status" value="1"/>
</dbReference>
<dbReference type="FunFam" id="2.10.25.10:FF:000105">
    <property type="entry name" value="laminin subunit gamma-1"/>
    <property type="match status" value="1"/>
</dbReference>
<dbReference type="FunFam" id="2.10.25.10:FF:000163">
    <property type="entry name" value="laminin subunit gamma-1"/>
    <property type="match status" value="1"/>
</dbReference>
<dbReference type="FunFam" id="2.10.25.10:FF:000166">
    <property type="entry name" value="laminin subunit gamma-1"/>
    <property type="match status" value="1"/>
</dbReference>
<dbReference type="Gene3D" id="2.60.120.260">
    <property type="entry name" value="Galactose-binding domain-like"/>
    <property type="match status" value="1"/>
</dbReference>
<dbReference type="Gene3D" id="2.10.25.10">
    <property type="entry name" value="Laminin"/>
    <property type="match status" value="10"/>
</dbReference>
<dbReference type="InterPro" id="IPR000742">
    <property type="entry name" value="EGF-like_dom"/>
</dbReference>
<dbReference type="InterPro" id="IPR050440">
    <property type="entry name" value="Laminin/Netrin_ECM"/>
</dbReference>
<dbReference type="InterPro" id="IPR000034">
    <property type="entry name" value="Laminin_IV"/>
</dbReference>
<dbReference type="InterPro" id="IPR008211">
    <property type="entry name" value="Laminin_N"/>
</dbReference>
<dbReference type="InterPro" id="IPR002049">
    <property type="entry name" value="LE_dom"/>
</dbReference>
<dbReference type="InterPro" id="IPR056863">
    <property type="entry name" value="LMN_ATRN_NET-like_EGF"/>
</dbReference>
<dbReference type="PANTHER" id="PTHR10574:SF270">
    <property type="entry name" value="LAMININ SUBUNIT GAMMA-1"/>
    <property type="match status" value="1"/>
</dbReference>
<dbReference type="PANTHER" id="PTHR10574">
    <property type="entry name" value="NETRIN/LAMININ-RELATED"/>
    <property type="match status" value="1"/>
</dbReference>
<dbReference type="Pfam" id="PF00053">
    <property type="entry name" value="EGF_laminin"/>
    <property type="match status" value="8"/>
</dbReference>
<dbReference type="Pfam" id="PF24973">
    <property type="entry name" value="EGF_LMN_ATRN"/>
    <property type="match status" value="3"/>
</dbReference>
<dbReference type="Pfam" id="PF00052">
    <property type="entry name" value="Laminin_B"/>
    <property type="match status" value="1"/>
</dbReference>
<dbReference type="Pfam" id="PF00055">
    <property type="entry name" value="Laminin_N"/>
    <property type="match status" value="1"/>
</dbReference>
<dbReference type="PRINTS" id="PR00011">
    <property type="entry name" value="EGFLAMININ"/>
</dbReference>
<dbReference type="SMART" id="SM00181">
    <property type="entry name" value="EGF"/>
    <property type="match status" value="8"/>
</dbReference>
<dbReference type="SMART" id="SM00180">
    <property type="entry name" value="EGF_Lam"/>
    <property type="match status" value="11"/>
</dbReference>
<dbReference type="SMART" id="SM00281">
    <property type="entry name" value="LamB"/>
    <property type="match status" value="1"/>
</dbReference>
<dbReference type="SMART" id="SM00136">
    <property type="entry name" value="LamNT"/>
    <property type="match status" value="1"/>
</dbReference>
<dbReference type="SUPFAM" id="SSF57196">
    <property type="entry name" value="EGF/Laminin"/>
    <property type="match status" value="10"/>
</dbReference>
<dbReference type="SUPFAM" id="SSF58104">
    <property type="entry name" value="Methyl-accepting chemotaxis protein (MCP) signaling domain"/>
    <property type="match status" value="1"/>
</dbReference>
<dbReference type="SUPFAM" id="SSF57997">
    <property type="entry name" value="Tropomyosin"/>
    <property type="match status" value="1"/>
</dbReference>
<dbReference type="PROSITE" id="PS00022">
    <property type="entry name" value="EGF_1"/>
    <property type="match status" value="7"/>
</dbReference>
<dbReference type="PROSITE" id="PS01186">
    <property type="entry name" value="EGF_2"/>
    <property type="match status" value="2"/>
</dbReference>
<dbReference type="PROSITE" id="PS01248">
    <property type="entry name" value="EGF_LAM_1"/>
    <property type="match status" value="10"/>
</dbReference>
<dbReference type="PROSITE" id="PS50027">
    <property type="entry name" value="EGF_LAM_2"/>
    <property type="match status" value="10"/>
</dbReference>
<dbReference type="PROSITE" id="PS51115">
    <property type="entry name" value="LAMININ_IVA"/>
    <property type="match status" value="1"/>
</dbReference>
<dbReference type="PROSITE" id="PS51117">
    <property type="entry name" value="LAMININ_NTER"/>
    <property type="match status" value="1"/>
</dbReference>
<evidence type="ECO:0000250" key="1"/>
<evidence type="ECO:0000255" key="2"/>
<evidence type="ECO:0000255" key="3">
    <source>
        <dbReference type="PROSITE-ProRule" id="PRU00458"/>
    </source>
</evidence>
<evidence type="ECO:0000255" key="4">
    <source>
        <dbReference type="PROSITE-ProRule" id="PRU00460"/>
    </source>
</evidence>
<evidence type="ECO:0000255" key="5">
    <source>
        <dbReference type="PROSITE-ProRule" id="PRU00466"/>
    </source>
</evidence>
<evidence type="ECO:0000256" key="6">
    <source>
        <dbReference type="SAM" id="MobiDB-lite"/>
    </source>
</evidence>
<comment type="function">
    <text evidence="1">Binding to cells via a high affinity receptor, laminin is thought to mediate the attachment, migration and organization of cells into tissues during embryonic development by interacting with other extracellular matrix components.</text>
</comment>
<comment type="subunit">
    <text evidence="1">Laminin is a complex glycoprotein, consisting of three different polypeptide chains (alpha, beta, gamma), which are bound to each other by disulfide bonds into a cross-shaped molecule comprising one long and three short arms with globules at each end.</text>
</comment>
<comment type="subcellular location">
    <subcellularLocation>
        <location evidence="1">Secreted</location>
        <location evidence="1">Extracellular space</location>
        <location evidence="1">Extracellular matrix</location>
        <location evidence="1">Basement membrane</location>
    </subcellularLocation>
</comment>
<sequence length="1592" mass="175580">MRAPVLAVLAVLLLGTVRAAMDECYEEGSPQRCMPEFVNAAFNATVVATNTCGTPPEEYCVQTGVTGVTKSCHICDSGQFHLQHGAEYLTDYNNQAEITWWQSQTMLAGIQYPSTINLTLHLGKAFDITYVRLKFHTSRPESFALYKRTHEDGPWIPYQYYSGSCEKTYQKFNRGFIRTGEDEQQALCTDEFSDISPLTGGNVAFSTLEGRPSAYNFDNSPVLQEWVTATDIRVTLNRLNTFGDEVFSDPKVLKSYYYAISDFAVGGRCKCNGHASECVRNEFEKIVCNCKHNTFGSDCEKCLPFYNDRPWRRSTADSPNECLPCNCNGRSQECYFDPELYRSTGHGGHCTGCADNTDGPNCERCRENYYRQDNNEPCHACQCNPVGSLSTQCDNYGRCSCKPGVMGEKCDRCQPGFHSLTEAGCRPCACNPAGSTDECNVETGRCSCKDNVEGFNCERCKPGFFHLDEANPRGCTPCFCYGHSSVCSSAEGYRVSSIVSTFESGVEGWTAQQRDGSEYSLSWVSDSSAVSVISESYFPIYFIAPAKFLGNQGASYGQNLTFSFRVERRDTRLSAEDLVLEGAGLRVSVPLIAQGNSYPSETTQRYIFRMHEATDYPWRPSVSPFEFQKMLQNLTAIKIRGSYSERSAGFLEEVSLVTAVAGAGPSAPWVEICSCPTGYIGQFCERCAPGYRRENPSQGPYSPCVLCTCNGHSDTCDPESGVCDCQHNTAGPHCERCSEGYYGDSTTGSASDCQPCPCPGGSSCAVVPRTKEVVCTNCPLGTTGKRCELCDDGYFGDPLGENGAPRPCRICECSNNIDPNAVGNCDRLTGECLKCIYNTGGFYCDRCRDGFYGNPLAQNPDLKCRACSCNPYGTVKGQSGCNQVTGQCECLPHVTERDCSACEPGFYNLLSGRGCERCDCHSLGSTSGQCDVRTGQCECHPGISGQQCQQCEPNHFGFGPEGCKPCDCDPEGSGSLQCKEDGRCECKSGFVGTRCDQCEENYFYNRSGPGCQECPACYRLVKDKVNEQRGKLQELEDLLKNLSTGEENITDQAFEERLREAEKAVNDLLLDAQSSKDVDQGMLDRLAEINTTLSFQLERLQNIRDMIRDTDKQAQEARDRVENTEFIIDSARVQLEKAKMAIANVSITPPESTGDPNNMTLLAEEARKLAERHMQEARDIEKAAKEANDTANEALRLLQKTLASENQTALDIEELNRKYAQAKDIARELEKQASKVHAEAEEAGNRALQIYANLTSVPSIDTTALQNEADKIQKEAEELDSLIDRKLRDYEDLREDMRGREMEVKNLLDKGKTEQQTADQLLARADAAKAQAEEAAKKGRETLQEANDILNKLRDFDKRVNDNKTAAEAALRKIPMIAQTIAEANNKTRQAESALGNANADARGAKSKAEEAEALANTVQKKAATARAEADNTFKEVTDLDGELQDMLQQLQEAENQLKKKQAEAESDEKMAEMASNATKDAESNANNSKKSVNGVLATIDELLSRLGQLDSVDVGQLTVLEKTLDDAKNQLRDSDLDRKLAELQESSNLQRVALDSYSRDIDQILRDIANLEDIKNTLPAGCYNTPIIEKP</sequence>
<proteinExistence type="evidence at transcript level"/>
<keyword id="KW-0084">Basement membrane</keyword>
<keyword id="KW-0130">Cell adhesion</keyword>
<keyword id="KW-0175">Coiled coil</keyword>
<keyword id="KW-1015">Disulfide bond</keyword>
<keyword id="KW-0272">Extracellular matrix</keyword>
<keyword id="KW-0325">Glycoprotein</keyword>
<keyword id="KW-0424">Laminin EGF-like domain</keyword>
<keyword id="KW-1185">Reference proteome</keyword>
<keyword id="KW-0677">Repeat</keyword>
<keyword id="KW-0964">Secreted</keyword>
<keyword id="KW-0732">Signal</keyword>